<proteinExistence type="evidence at protein level"/>
<accession>Q96303</accession>
<gene>
    <name type="primary">PHT1-4</name>
    <name type="synonym">PHT4</name>
    <name type="synonym">PT2</name>
    <name type="ordered locus">At2g38940</name>
    <name type="ORF">T7F6.11</name>
</gene>
<sequence length="534" mass="58599">MAREQLQVLNALDVAKTQWYHFTAIIIAGMGFFTDAYDLFCISLVTKLLGRIYYHVEGAQKPGTLPPNVAAAVNGVAFCGTLAGQLFFGWLGDKLGRKKVYGMTLMVMVLCSIASGLSFGHEPKAVMATLCFFRFWLGFGIGGDYPLSATIMSEYANKKTRGAFVSAVFAMQGFGIMAGGIFAIIISSAFEAKFPSPAYADDALGSTIPQADLVWRIILMAGAIPAAMTYYSRSKMPETARYTALVAKDAKQAASDMSKVLQVEIEPEQQKLEEISKEKSKAFGLFSKEFMSRHGLHLLGTTSTWFLLDIAFYSQNLFQKDIFSAIGWIPPAQSMNAIQEVFKIARAQTLIALCSTVPGYWFTVAFIDVIGRFAIQMMGFFFMTVFMFALAIPYNHWTHKENRIGFVIMYSLTFFFANFGPNATTFVVPAEIFPARFRSTCHGISAASGKLGAMVGAFGFLYLAQNPDKDKTDAGYPPGIGVRNSLIVLGVVNFLGILFTFLVPESKGKSLEEMSGENEDNENSNNDSRTVPIV</sequence>
<dbReference type="EMBL" id="U62331">
    <property type="protein sequence ID" value="AAB17266.1"/>
    <property type="molecule type" value="mRNA"/>
</dbReference>
<dbReference type="EMBL" id="AF022872">
    <property type="protein sequence ID" value="AAB88291.1"/>
    <property type="molecule type" value="Genomic_DNA"/>
</dbReference>
<dbReference type="EMBL" id="AB016166">
    <property type="protein sequence ID" value="BAA34398.1"/>
    <property type="molecule type" value="Genomic_DNA"/>
</dbReference>
<dbReference type="EMBL" id="AC005770">
    <property type="protein sequence ID" value="AAC79607.1"/>
    <property type="molecule type" value="Genomic_DNA"/>
</dbReference>
<dbReference type="EMBL" id="CP002685">
    <property type="protein sequence ID" value="AEC09615.1"/>
    <property type="molecule type" value="Genomic_DNA"/>
</dbReference>
<dbReference type="PIR" id="C84811">
    <property type="entry name" value="C84811"/>
</dbReference>
<dbReference type="SMR" id="Q96303"/>
<dbReference type="BioGRID" id="3818">
    <property type="interactions" value="7"/>
</dbReference>
<dbReference type="FunCoup" id="Q96303">
    <property type="interactions" value="413"/>
</dbReference>
<dbReference type="STRING" id="3702.Q96303"/>
<dbReference type="iPTMnet" id="Q96303"/>
<dbReference type="PaxDb" id="3702-AT2G38940.1"/>
<dbReference type="ProteomicsDB" id="234664"/>
<dbReference type="EnsemblPlants" id="AT2G38940.1">
    <property type="protein sequence ID" value="AT2G38940.1"/>
    <property type="gene ID" value="AT2G38940"/>
</dbReference>
<dbReference type="GeneID" id="818479"/>
<dbReference type="Gramene" id="AT2G38940.1">
    <property type="protein sequence ID" value="AT2G38940.1"/>
    <property type="gene ID" value="AT2G38940"/>
</dbReference>
<dbReference type="KEGG" id="ath:AT2G38940"/>
<dbReference type="Araport" id="AT2G38940"/>
<dbReference type="TAIR" id="AT2G38940">
    <property type="gene designation" value="PHT1"/>
</dbReference>
<dbReference type="eggNOG" id="KOG0252">
    <property type="taxonomic scope" value="Eukaryota"/>
</dbReference>
<dbReference type="HOGENOM" id="CLU_001265_46_14_1"/>
<dbReference type="InParanoid" id="Q96303"/>
<dbReference type="OMA" id="NYWTHKD"/>
<dbReference type="OrthoDB" id="433512at2759"/>
<dbReference type="PhylomeDB" id="Q96303"/>
<dbReference type="PRO" id="PR:Q96303"/>
<dbReference type="Proteomes" id="UP000006548">
    <property type="component" value="Chromosome 2"/>
</dbReference>
<dbReference type="ExpressionAtlas" id="Q96303">
    <property type="expression patterns" value="baseline and differential"/>
</dbReference>
<dbReference type="GO" id="GO:0005794">
    <property type="term" value="C:Golgi apparatus"/>
    <property type="evidence" value="ECO:0007005"/>
    <property type="project" value="TAIR"/>
</dbReference>
<dbReference type="GO" id="GO:0005886">
    <property type="term" value="C:plasma membrane"/>
    <property type="evidence" value="ECO:0007005"/>
    <property type="project" value="TAIR"/>
</dbReference>
<dbReference type="GO" id="GO:0009506">
    <property type="term" value="C:plasmodesma"/>
    <property type="evidence" value="ECO:0007005"/>
    <property type="project" value="TAIR"/>
</dbReference>
<dbReference type="GO" id="GO:0005773">
    <property type="term" value="C:vacuole"/>
    <property type="evidence" value="ECO:0007005"/>
    <property type="project" value="TAIR"/>
</dbReference>
<dbReference type="GO" id="GO:0005315">
    <property type="term" value="F:phosphate transmembrane transporter activity"/>
    <property type="evidence" value="ECO:0000250"/>
    <property type="project" value="TAIR"/>
</dbReference>
<dbReference type="GO" id="GO:0015293">
    <property type="term" value="F:symporter activity"/>
    <property type="evidence" value="ECO:0007669"/>
    <property type="project" value="UniProtKB-KW"/>
</dbReference>
<dbReference type="GO" id="GO:0006817">
    <property type="term" value="P:phosphate ion transport"/>
    <property type="evidence" value="ECO:0007669"/>
    <property type="project" value="UniProtKB-KW"/>
</dbReference>
<dbReference type="CDD" id="cd17364">
    <property type="entry name" value="MFS_PhT"/>
    <property type="match status" value="1"/>
</dbReference>
<dbReference type="FunFam" id="1.20.1250.20:FF:000175">
    <property type="entry name" value="Inorganic phosphate transporter 1-6"/>
    <property type="match status" value="1"/>
</dbReference>
<dbReference type="Gene3D" id="1.20.1250.20">
    <property type="entry name" value="MFS general substrate transporter like domains"/>
    <property type="match status" value="1"/>
</dbReference>
<dbReference type="InterPro" id="IPR020846">
    <property type="entry name" value="MFS_dom"/>
</dbReference>
<dbReference type="InterPro" id="IPR005828">
    <property type="entry name" value="MFS_sugar_transport-like"/>
</dbReference>
<dbReference type="InterPro" id="IPR036259">
    <property type="entry name" value="MFS_trans_sf"/>
</dbReference>
<dbReference type="InterPro" id="IPR004738">
    <property type="entry name" value="Phos_permease"/>
</dbReference>
<dbReference type="NCBIfam" id="TIGR00887">
    <property type="entry name" value="2A0109"/>
    <property type="match status" value="1"/>
</dbReference>
<dbReference type="PANTHER" id="PTHR24064">
    <property type="entry name" value="SOLUTE CARRIER FAMILY 22 MEMBER"/>
    <property type="match status" value="1"/>
</dbReference>
<dbReference type="Pfam" id="PF00083">
    <property type="entry name" value="Sugar_tr"/>
    <property type="match status" value="1"/>
</dbReference>
<dbReference type="SUPFAM" id="SSF103473">
    <property type="entry name" value="MFS general substrate transporter"/>
    <property type="match status" value="1"/>
</dbReference>
<dbReference type="PROSITE" id="PS50850">
    <property type="entry name" value="MFS"/>
    <property type="match status" value="1"/>
</dbReference>
<keyword id="KW-1003">Cell membrane</keyword>
<keyword id="KW-0472">Membrane</keyword>
<keyword id="KW-0592">Phosphate transport</keyword>
<keyword id="KW-0597">Phosphoprotein</keyword>
<keyword id="KW-1185">Reference proteome</keyword>
<keyword id="KW-0769">Symport</keyword>
<keyword id="KW-0812">Transmembrane</keyword>
<keyword id="KW-1133">Transmembrane helix</keyword>
<keyword id="KW-0813">Transport</keyword>
<keyword id="KW-0832">Ubl conjugation</keyword>
<comment type="function">
    <text evidence="7 8 10">High-affinity transporter for external inorganic phosphate. Acts as a H(+):phosphate symporter in both low- and high-Pi conditions. Confers sensitivity to arsenate.</text>
</comment>
<comment type="subunit">
    <text evidence="9">Interacts with NLA.</text>
</comment>
<comment type="subcellular location">
    <subcellularLocation>
        <location evidence="6 9 13">Cell membrane</location>
        <topology evidence="13">Multi-pass membrane protein</topology>
    </subcellularLocation>
    <text evidence="9">Localizes at the plasma membrane, where it interacts with NLA.</text>
</comment>
<comment type="tissue specificity">
    <text evidence="4 5 8 10 11">Mostly expressed in roots, in tissues connecting the lateral roots to the primary root. Also present in flowers, in senescing anther filaments and in the abscission zone at the base of siliques. Expressed in hydathodes and axillary buds, and in some senescing leaves. After Pi starvation, localized in all cells of undifferentiated root segments, including root tips and root hairs, and in the epidermis, cortex and stellar regions of mature root segments.</text>
</comment>
<comment type="induction">
    <text evidence="3 4 5 7 8 10">In roots by phosphate starvation. Repressed by the Pi analog phosphite (Phi).</text>
</comment>
<comment type="PTM">
    <text evidence="9">Ubiquitinated by NLA. Ubiquitination of PHT1-4 leads to its degradation by the proteasome.</text>
</comment>
<comment type="miscellaneous">
    <text>Although related to the sugar transporter family, it does not transport sugars.</text>
</comment>
<comment type="similarity">
    <text evidence="12">Belongs to the major facilitator superfamily. Phosphate:H(+) symporter (TC 2.A.1.9) family.</text>
</comment>
<organism>
    <name type="scientific">Arabidopsis thaliana</name>
    <name type="common">Mouse-ear cress</name>
    <dbReference type="NCBI Taxonomy" id="3702"/>
    <lineage>
        <taxon>Eukaryota</taxon>
        <taxon>Viridiplantae</taxon>
        <taxon>Streptophyta</taxon>
        <taxon>Embryophyta</taxon>
        <taxon>Tracheophyta</taxon>
        <taxon>Spermatophyta</taxon>
        <taxon>Magnoliopsida</taxon>
        <taxon>eudicotyledons</taxon>
        <taxon>Gunneridae</taxon>
        <taxon>Pentapetalae</taxon>
        <taxon>rosids</taxon>
        <taxon>malvids</taxon>
        <taxon>Brassicales</taxon>
        <taxon>Brassicaceae</taxon>
        <taxon>Camelineae</taxon>
        <taxon>Arabidopsis</taxon>
    </lineage>
</organism>
<feature type="chain" id="PRO_0000050471" description="Inorganic phosphate transporter 1-4">
    <location>
        <begin position="1"/>
        <end position="534"/>
    </location>
</feature>
<feature type="topological domain" description="Cytoplasmic" evidence="1">
    <location>
        <begin position="1"/>
        <end position="24"/>
    </location>
</feature>
<feature type="transmembrane region" description="Helical" evidence="1">
    <location>
        <begin position="25"/>
        <end position="45"/>
    </location>
</feature>
<feature type="topological domain" description="Extracellular" evidence="1">
    <location>
        <begin position="46"/>
        <end position="70"/>
    </location>
</feature>
<feature type="transmembrane region" description="Helical" evidence="1">
    <location>
        <begin position="71"/>
        <end position="91"/>
    </location>
</feature>
<feature type="topological domain" description="Cytoplasmic" evidence="1">
    <location>
        <begin position="92"/>
        <end position="99"/>
    </location>
</feature>
<feature type="transmembrane region" description="Helical" evidence="1">
    <location>
        <begin position="100"/>
        <end position="120"/>
    </location>
</feature>
<feature type="topological domain" description="Extracellular" evidence="1">
    <location>
        <begin position="121"/>
        <end position="131"/>
    </location>
</feature>
<feature type="transmembrane region" description="Helical" evidence="1">
    <location>
        <begin position="132"/>
        <end position="152"/>
    </location>
</feature>
<feature type="topological domain" description="Cytoplasmic" evidence="1">
    <location>
        <begin position="153"/>
        <end position="161"/>
    </location>
</feature>
<feature type="transmembrane region" description="Helical" evidence="1">
    <location>
        <begin position="162"/>
        <end position="182"/>
    </location>
</feature>
<feature type="topological domain" description="Extracellular" evidence="1">
    <location>
        <begin position="183"/>
        <end position="211"/>
    </location>
</feature>
<feature type="transmembrane region" description="Helical" evidence="1">
    <location>
        <begin position="212"/>
        <end position="232"/>
    </location>
</feature>
<feature type="topological domain" description="Cytoplasmic" evidence="1">
    <location>
        <begin position="233"/>
        <end position="293"/>
    </location>
</feature>
<feature type="transmembrane region" description="Helical" evidence="1">
    <location>
        <begin position="294"/>
        <end position="314"/>
    </location>
</feature>
<feature type="topological domain" description="Extracellular" evidence="1">
    <location>
        <begin position="315"/>
        <end position="349"/>
    </location>
</feature>
<feature type="transmembrane region" description="Helical" evidence="1">
    <location>
        <begin position="350"/>
        <end position="370"/>
    </location>
</feature>
<feature type="topological domain" description="Cytoplasmic" evidence="1">
    <location>
        <begin position="371"/>
        <end position="372"/>
    </location>
</feature>
<feature type="transmembrane region" description="Helical" evidence="1">
    <location>
        <begin position="373"/>
        <end position="393"/>
    </location>
</feature>
<feature type="topological domain" description="Extracellular" evidence="1">
    <location>
        <begin position="394"/>
        <end position="403"/>
    </location>
</feature>
<feature type="transmembrane region" description="Helical" evidence="1">
    <location>
        <begin position="404"/>
        <end position="424"/>
    </location>
</feature>
<feature type="topological domain" description="Cytoplasmic" evidence="1">
    <location>
        <begin position="425"/>
        <end position="442"/>
    </location>
</feature>
<feature type="transmembrane region" description="Helical" evidence="1">
    <location>
        <begin position="443"/>
        <end position="463"/>
    </location>
</feature>
<feature type="topological domain" description="Extracellular" evidence="1">
    <location>
        <begin position="464"/>
        <end position="484"/>
    </location>
</feature>
<feature type="transmembrane region" description="Helical" evidence="1">
    <location>
        <begin position="485"/>
        <end position="505"/>
    </location>
</feature>
<feature type="topological domain" description="Cytoplasmic" evidence="1">
    <location>
        <begin position="506"/>
        <end position="534"/>
    </location>
</feature>
<feature type="region of interest" description="Disordered" evidence="2">
    <location>
        <begin position="512"/>
        <end position="534"/>
    </location>
</feature>
<feature type="modified residue" description="Phosphoserine" evidence="14 15 16 17">
    <location>
        <position position="524"/>
    </location>
</feature>
<feature type="modified residue" description="Phosphoserine" evidence="17">
    <location>
        <position position="528"/>
    </location>
</feature>
<evidence type="ECO:0000255" key="1"/>
<evidence type="ECO:0000256" key="2">
    <source>
        <dbReference type="SAM" id="MobiDB-lite"/>
    </source>
</evidence>
<evidence type="ECO:0000269" key="3">
    <source>
    </source>
</evidence>
<evidence type="ECO:0000269" key="4">
    <source>
    </source>
</evidence>
<evidence type="ECO:0000269" key="5">
    <source>
    </source>
</evidence>
<evidence type="ECO:0000269" key="6">
    <source>
    </source>
</evidence>
<evidence type="ECO:0000269" key="7">
    <source>
    </source>
</evidence>
<evidence type="ECO:0000269" key="8">
    <source>
    </source>
</evidence>
<evidence type="ECO:0000269" key="9">
    <source>
    </source>
</evidence>
<evidence type="ECO:0000269" key="10">
    <source>
    </source>
</evidence>
<evidence type="ECO:0000269" key="11">
    <source>
    </source>
</evidence>
<evidence type="ECO:0000305" key="12"/>
<evidence type="ECO:0000305" key="13">
    <source>
    </source>
</evidence>
<evidence type="ECO:0007744" key="14">
    <source>
    </source>
</evidence>
<evidence type="ECO:0007744" key="15">
    <source>
    </source>
</evidence>
<evidence type="ECO:0007744" key="16">
    <source>
    </source>
</evidence>
<evidence type="ECO:0007744" key="17">
    <source>
    </source>
</evidence>
<protein>
    <recommendedName>
        <fullName>Inorganic phosphate transporter 1-4</fullName>
        <shortName>AtPht1;4</shortName>
    </recommendedName>
    <alternativeName>
        <fullName>H(+)/Pi cotransporter</fullName>
    </alternativeName>
</protein>
<reference key="1">
    <citation type="journal article" date="1996" name="Proc. Natl. Acad. Sci. U.S.A.">
        <title>Phosphate transporters from the higher plant Arabidopsis thaliana.</title>
        <authorList>
            <person name="Muchhal U.S."/>
            <person name="Pardo J.M."/>
            <person name="Raghothama K.G."/>
        </authorList>
    </citation>
    <scope>NUCLEOTIDE SEQUENCE [MRNA]</scope>
    <scope>FUNCTION</scope>
    <scope>TISSUE SPECIFICITY</scope>
    <scope>INDUCTION</scope>
    <source>
        <strain>cv. Columbia</strain>
        <tissue>Root</tissue>
    </source>
</reference>
<reference key="2">
    <citation type="online journal article" date="1997" name="Plant Gene Register">
        <title>Cloning of Arabidopsis thaliana phosphate transporter gene, AtPT2.</title>
        <authorList>
            <person name="Mukatira U.T."/>
            <person name="Muchhal U.S."/>
            <person name="Raghothama K.G."/>
        </authorList>
        <locator>PGR97-163</locator>
    </citation>
    <scope>NUCLEOTIDE SEQUENCE [GENOMIC DNA]</scope>
    <source>
        <strain>cv. Landsberg erecta</strain>
    </source>
</reference>
<reference key="3">
    <citation type="journal article" date="1998" name="DNA Res.">
        <title>Phosphate transporter gene family of Arabidopsis thaliana.</title>
        <authorList>
            <person name="Okumura S."/>
            <person name="Mitsukawa N."/>
            <person name="Shirano Y."/>
            <person name="Shibata D."/>
        </authorList>
    </citation>
    <scope>NUCLEOTIDE SEQUENCE [GENOMIC DNA]</scope>
    <scope>TISSUE SPECIFICITY</scope>
    <source>
        <strain>cv. Columbia</strain>
    </source>
</reference>
<reference key="4">
    <citation type="journal article" date="1999" name="Nature">
        <title>Sequence and analysis of chromosome 2 of the plant Arabidopsis thaliana.</title>
        <authorList>
            <person name="Lin X."/>
            <person name="Kaul S."/>
            <person name="Rounsley S.D."/>
            <person name="Shea T.P."/>
            <person name="Benito M.-I."/>
            <person name="Town C.D."/>
            <person name="Fujii C.Y."/>
            <person name="Mason T.M."/>
            <person name="Bowman C.L."/>
            <person name="Barnstead M.E."/>
            <person name="Feldblyum T.V."/>
            <person name="Buell C.R."/>
            <person name="Ketchum K.A."/>
            <person name="Lee J.J."/>
            <person name="Ronning C.M."/>
            <person name="Koo H.L."/>
            <person name="Moffat K.S."/>
            <person name="Cronin L.A."/>
            <person name="Shen M."/>
            <person name="Pai G."/>
            <person name="Van Aken S."/>
            <person name="Umayam L."/>
            <person name="Tallon L.J."/>
            <person name="Gill J.E."/>
            <person name="Adams M.D."/>
            <person name="Carrera A.J."/>
            <person name="Creasy T.H."/>
            <person name="Goodman H.M."/>
            <person name="Somerville C.R."/>
            <person name="Copenhaver G.P."/>
            <person name="Preuss D."/>
            <person name="Nierman W.C."/>
            <person name="White O."/>
            <person name="Eisen J.A."/>
            <person name="Salzberg S.L."/>
            <person name="Fraser C.M."/>
            <person name="Venter J.C."/>
        </authorList>
    </citation>
    <scope>NUCLEOTIDE SEQUENCE [LARGE SCALE GENOMIC DNA]</scope>
    <source>
        <strain>cv. Columbia</strain>
    </source>
</reference>
<reference key="5">
    <citation type="journal article" date="2017" name="Plant J.">
        <title>Araport11: a complete reannotation of the Arabidopsis thaliana reference genome.</title>
        <authorList>
            <person name="Cheng C.Y."/>
            <person name="Krishnakumar V."/>
            <person name="Chan A.P."/>
            <person name="Thibaud-Nissen F."/>
            <person name="Schobel S."/>
            <person name="Town C.D."/>
        </authorList>
    </citation>
    <scope>GENOME REANNOTATION</scope>
    <source>
        <strain>cv. Columbia</strain>
    </source>
</reference>
<reference key="6">
    <citation type="journal article" date="2002" name="Plant J.">
        <title>Expression analysis suggests novel roles for members of the Pht1 family of phosphate transporters in Arabidopsis.</title>
        <authorList>
            <person name="Mudge S.R."/>
            <person name="Rae A.L."/>
            <person name="Diatloff E."/>
            <person name="Smith F.W."/>
        </authorList>
    </citation>
    <scope>TISSUE SPECIFICITY</scope>
    <scope>INDUCTION</scope>
    <scope>GENE FAMILY</scope>
    <scope>NOMENCLATURE</scope>
</reference>
<reference key="7">
    <citation type="journal article" date="2002" name="Plant Physiol.">
        <title>Phosphite, an analog of phosphate, suppresses the coordinated expression of genes under phosphate starvation.</title>
        <authorList>
            <person name="Varadarajan D.K."/>
            <person name="Karthikeyan A.S."/>
            <person name="Matilda P.D."/>
            <person name="Raghothama K.G."/>
        </authorList>
    </citation>
    <scope>INDUCTION</scope>
</reference>
<reference key="8">
    <citation type="journal article" date="2002" name="Plant Physiol.">
        <title>Regulated expression of Arabidopsis phosphate transporters.</title>
        <authorList>
            <person name="Karthikeyan A.S."/>
            <person name="Varadarajan D.K."/>
            <person name="Mukatira U.T."/>
            <person name="D'Urzo M.P."/>
            <person name="Damsz B."/>
            <person name="Raghothama K.G."/>
        </authorList>
    </citation>
    <scope>TISSUE SPECIFICITY</scope>
    <scope>INDUCTION</scope>
</reference>
<reference key="9">
    <citation type="journal article" date="2003" name="Mol. Cell. Proteomics">
        <title>Large-scale analysis of in vivo phosphorylated membrane proteins by immobilized metal ion affinity chromatography and mass spectrometry.</title>
        <authorList>
            <person name="Nuehse T.S."/>
            <person name="Stensballe A."/>
            <person name="Jensen O.N."/>
            <person name="Peck S.C."/>
        </authorList>
    </citation>
    <scope>PHOSPHORYLATION [LARGE SCALE ANALYSIS] AT SER-524</scope>
    <scope>IDENTIFICATION BY MASS SPECTROMETRY [LARGE SCALE ANALYSIS]</scope>
    <source>
        <strain>cv. La-0</strain>
    </source>
</reference>
<reference key="10">
    <citation type="journal article" date="2004" name="Mol. Cell. Proteomics">
        <title>Identification of new intrinsic proteins in Arabidopsis plasma membrane proteome.</title>
        <authorList>
            <person name="Marmagne A."/>
            <person name="Rouet M.-A."/>
            <person name="Ferro M."/>
            <person name="Rolland N."/>
            <person name="Alcon C."/>
            <person name="Joyard J."/>
            <person name="Garin J."/>
            <person name="Barbier-Brygoo H."/>
            <person name="Ephritikhine G."/>
        </authorList>
    </citation>
    <scope>IDENTIFICATION BY MASS SPECTROMETRY</scope>
    <scope>SUBCELLULAR LOCATION [LARGE SCALE ANALYSIS]</scope>
</reference>
<reference key="11">
    <citation type="journal article" date="2004" name="Plant Cell">
        <title>Phosphoproteomics of the Arabidopsis plasma membrane and a new phosphorylation site database.</title>
        <authorList>
            <person name="Nuehse T.S."/>
            <person name="Stensballe A."/>
            <person name="Jensen O.N."/>
            <person name="Peck S.C."/>
        </authorList>
    </citation>
    <scope>SUBCELLULAR LOCATION</scope>
    <scope>PHOSPHORYLATION [LARGE SCALE ANALYSIS] AT SER-524</scope>
    <scope>IDENTIFICATION BY MASS SPECTROMETRY [LARGE SCALE ANALYSIS]</scope>
</reference>
<reference key="12">
    <citation type="journal article" date="2004" name="Plant J.">
        <title>Phosphate transport in Arabidopsis: Pht1;1 and Pht1;4 play a major role in phosphate acquisition from both low- and high-phosphate environments.</title>
        <authorList>
            <person name="Shin H."/>
            <person name="Shin H.-S."/>
            <person name="Dewbre G.R."/>
            <person name="Harrison M.J."/>
        </authorList>
    </citation>
    <scope>FUNCTION</scope>
    <scope>INDUCTION</scope>
</reference>
<reference key="13">
    <citation type="journal article" date="2004" name="Plant Mol. Biol.">
        <title>Transcriptional regulation and functional properties of Arabidopsis Pht1;4, a high affinity transporter contributing greatly to phosphate uptake in phosphate deprived plants.</title>
        <authorList>
            <person name="Misson J."/>
            <person name="Thibaud M.-C."/>
            <person name="Bechtold N."/>
            <person name="Raghothama K."/>
            <person name="Nussaume L."/>
        </authorList>
    </citation>
    <scope>FUNCTION</scope>
    <scope>TISSUE SPECIFICITY</scope>
    <scope>INDUCTION</scope>
</reference>
<reference key="14">
    <citation type="journal article" date="2008" name="J. Proteome Res.">
        <title>Site-specific phosphorylation profiling of Arabidopsis proteins by mass spectrometry and peptide chip analysis.</title>
        <authorList>
            <person name="de la Fuente van Bentem S."/>
            <person name="Anrather D."/>
            <person name="Dohnal I."/>
            <person name="Roitinger E."/>
            <person name="Csaszar E."/>
            <person name="Joore J."/>
            <person name="Buijnink J."/>
            <person name="Carreri A."/>
            <person name="Forzani C."/>
            <person name="Lorkovic Z.J."/>
            <person name="Barta A."/>
            <person name="Lecourieux D."/>
            <person name="Verhounig A."/>
            <person name="Jonak C."/>
            <person name="Hirt H."/>
        </authorList>
    </citation>
    <scope>PHOSPHORYLATION [LARGE SCALE ANALYSIS] AT SER-524</scope>
    <scope>IDENTIFICATION BY MASS SPECTROMETRY [LARGE SCALE ANALYSIS]</scope>
    <source>
        <tissue>Root</tissue>
    </source>
</reference>
<reference key="15">
    <citation type="journal article" date="2009" name="J. Proteomics">
        <title>Phosphoproteomic analysis of nuclei-enriched fractions from Arabidopsis thaliana.</title>
        <authorList>
            <person name="Jones A.M.E."/>
            <person name="MacLean D."/>
            <person name="Studholme D.J."/>
            <person name="Serna-Sanz A."/>
            <person name="Andreasson E."/>
            <person name="Rathjen J.P."/>
            <person name="Peck S.C."/>
        </authorList>
    </citation>
    <scope>PHOSPHORYLATION [LARGE SCALE ANALYSIS] AT SER-524 AND SER-528</scope>
    <scope>IDENTIFICATION BY MASS SPECTROMETRY [LARGE SCALE ANALYSIS]</scope>
    <source>
        <strain>cv. Columbia</strain>
    </source>
</reference>
<reference key="16">
    <citation type="journal article" date="2013" name="Plant Cell">
        <title>Nitrogen limitation adaptation, a target of microRNA827, mediates degradation of plasma membrane-localized phosphate transporters to maintain phosphate homeostasis in Arabidopsis.</title>
        <authorList>
            <person name="Lin W.Y."/>
            <person name="Huang T.K."/>
            <person name="Chiou T.J."/>
        </authorList>
    </citation>
    <scope>INTERACTION WITH NLA</scope>
    <scope>SUBCELLULAR LOCATION</scope>
    <scope>UBIQUITINATION BY NLA</scope>
</reference>
<name>PHT14_ARATH</name>